<dbReference type="EC" id="1.1.5.4" evidence="1"/>
<dbReference type="EMBL" id="CP001182">
    <property type="protein sequence ID" value="ACJ40793.1"/>
    <property type="molecule type" value="Genomic_DNA"/>
</dbReference>
<dbReference type="RefSeq" id="WP_000714076.1">
    <property type="nucleotide sequence ID" value="NC_011586.2"/>
</dbReference>
<dbReference type="SMR" id="B7I894"/>
<dbReference type="KEGG" id="abn:AB57_1001"/>
<dbReference type="HOGENOM" id="CLU_028151_0_0_6"/>
<dbReference type="UniPathway" id="UPA00223">
    <property type="reaction ID" value="UER01008"/>
</dbReference>
<dbReference type="Proteomes" id="UP000007094">
    <property type="component" value="Chromosome"/>
</dbReference>
<dbReference type="GO" id="GO:0047545">
    <property type="term" value="F:2-hydroxyglutarate dehydrogenase activity"/>
    <property type="evidence" value="ECO:0007669"/>
    <property type="project" value="TreeGrafter"/>
</dbReference>
<dbReference type="GO" id="GO:0008924">
    <property type="term" value="F:L-malate dehydrogenase (quinone) activity"/>
    <property type="evidence" value="ECO:0007669"/>
    <property type="project" value="UniProtKB-UniRule"/>
</dbReference>
<dbReference type="GO" id="GO:0006099">
    <property type="term" value="P:tricarboxylic acid cycle"/>
    <property type="evidence" value="ECO:0007669"/>
    <property type="project" value="UniProtKB-UniRule"/>
</dbReference>
<dbReference type="HAMAP" id="MF_00212">
    <property type="entry name" value="MQO"/>
    <property type="match status" value="1"/>
</dbReference>
<dbReference type="InterPro" id="IPR036188">
    <property type="entry name" value="FAD/NAD-bd_sf"/>
</dbReference>
<dbReference type="InterPro" id="IPR006231">
    <property type="entry name" value="MQO"/>
</dbReference>
<dbReference type="NCBIfam" id="TIGR01320">
    <property type="entry name" value="mal_quin_oxido"/>
    <property type="match status" value="1"/>
</dbReference>
<dbReference type="NCBIfam" id="NF003603">
    <property type="entry name" value="PRK05257.1-1"/>
    <property type="match status" value="1"/>
</dbReference>
<dbReference type="NCBIfam" id="NF003605">
    <property type="entry name" value="PRK05257.1-4"/>
    <property type="match status" value="1"/>
</dbReference>
<dbReference type="NCBIfam" id="NF003606">
    <property type="entry name" value="PRK05257.2-1"/>
    <property type="match status" value="1"/>
</dbReference>
<dbReference type="NCBIfam" id="NF003611">
    <property type="entry name" value="PRK05257.3-2"/>
    <property type="match status" value="1"/>
</dbReference>
<dbReference type="NCBIfam" id="NF009875">
    <property type="entry name" value="PRK13339.1"/>
    <property type="match status" value="1"/>
</dbReference>
<dbReference type="PANTHER" id="PTHR43104">
    <property type="entry name" value="L-2-HYDROXYGLUTARATE DEHYDROGENASE, MITOCHONDRIAL"/>
    <property type="match status" value="1"/>
</dbReference>
<dbReference type="PANTHER" id="PTHR43104:SF2">
    <property type="entry name" value="L-2-HYDROXYGLUTARATE DEHYDROGENASE, MITOCHONDRIAL"/>
    <property type="match status" value="1"/>
</dbReference>
<dbReference type="Pfam" id="PF06039">
    <property type="entry name" value="Mqo"/>
    <property type="match status" value="1"/>
</dbReference>
<dbReference type="SUPFAM" id="SSF51905">
    <property type="entry name" value="FAD/NAD(P)-binding domain"/>
    <property type="match status" value="1"/>
</dbReference>
<name>MQO_ACIB5</name>
<reference key="1">
    <citation type="journal article" date="2008" name="J. Bacteriol.">
        <title>Comparative genome sequence analysis of multidrug-resistant Acinetobacter baumannii.</title>
        <authorList>
            <person name="Adams M.D."/>
            <person name="Goglin K."/>
            <person name="Molyneaux N."/>
            <person name="Hujer K.M."/>
            <person name="Lavender H."/>
            <person name="Jamison J.J."/>
            <person name="MacDonald I.J."/>
            <person name="Martin K.M."/>
            <person name="Russo T."/>
            <person name="Campagnari A.A."/>
            <person name="Hujer A.M."/>
            <person name="Bonomo R.A."/>
            <person name="Gill S.R."/>
        </authorList>
    </citation>
    <scope>NUCLEOTIDE SEQUENCE [LARGE SCALE GENOMIC DNA]</scope>
    <source>
        <strain>AB0057</strain>
    </source>
</reference>
<protein>
    <recommendedName>
        <fullName evidence="1">Probable malate:quinone oxidoreductase</fullName>
        <ecNumber evidence="1">1.1.5.4</ecNumber>
    </recommendedName>
    <alternativeName>
        <fullName evidence="1">MQO</fullName>
    </alternativeName>
    <alternativeName>
        <fullName evidence="1">Malate dehydrogenase [quinone]</fullName>
    </alternativeName>
</protein>
<keyword id="KW-0274">FAD</keyword>
<keyword id="KW-0285">Flavoprotein</keyword>
<keyword id="KW-0560">Oxidoreductase</keyword>
<keyword id="KW-0816">Tricarboxylic acid cycle</keyword>
<evidence type="ECO:0000255" key="1">
    <source>
        <dbReference type="HAMAP-Rule" id="MF_00212"/>
    </source>
</evidence>
<feature type="chain" id="PRO_1000191306" description="Probable malate:quinone oxidoreductase">
    <location>
        <begin position="1"/>
        <end position="546"/>
    </location>
</feature>
<accession>B7I894</accession>
<comment type="catalytic activity">
    <reaction evidence="1">
        <text>(S)-malate + a quinone = a quinol + oxaloacetate</text>
        <dbReference type="Rhea" id="RHEA:46012"/>
        <dbReference type="ChEBI" id="CHEBI:15589"/>
        <dbReference type="ChEBI" id="CHEBI:16452"/>
        <dbReference type="ChEBI" id="CHEBI:24646"/>
        <dbReference type="ChEBI" id="CHEBI:132124"/>
        <dbReference type="EC" id="1.1.5.4"/>
    </reaction>
</comment>
<comment type="cofactor">
    <cofactor evidence="1">
        <name>FAD</name>
        <dbReference type="ChEBI" id="CHEBI:57692"/>
    </cofactor>
</comment>
<comment type="pathway">
    <text evidence="1">Carbohydrate metabolism; tricarboxylic acid cycle; oxaloacetate from (S)-malate (quinone route): step 1/1.</text>
</comment>
<comment type="similarity">
    <text evidence="1">Belongs to the MQO family.</text>
</comment>
<organism>
    <name type="scientific">Acinetobacter baumannii (strain AB0057)</name>
    <dbReference type="NCBI Taxonomy" id="480119"/>
    <lineage>
        <taxon>Bacteria</taxon>
        <taxon>Pseudomonadati</taxon>
        <taxon>Pseudomonadota</taxon>
        <taxon>Gammaproteobacteria</taxon>
        <taxon>Moraxellales</taxon>
        <taxon>Moraxellaceae</taxon>
        <taxon>Acinetobacter</taxon>
        <taxon>Acinetobacter calcoaceticus/baumannii complex</taxon>
    </lineage>
</organism>
<proteinExistence type="inferred from homology"/>
<sequence length="546" mass="60451">MKKFLKYLLVLIILILIAGIVFLFRPIASKQVQTAKDEPVVDAVLVGGGIMSATLGTYFTELEPNWQIRMYERLDQVAQESSNGFNNAGTGHSGFMEMNYTEEKNGKMEIAKAEKVASQFEVAKQFWSYQVKQGVLAEPKTFINPVPHIAFVWGDNVKFLEKRYAAMIQSPLFKGMKFTEDPAVIKQWAPLVMTDRDPTQKVAATRMEVGSDVNYGSITKQLVNHLNQNPNFKLQTSTEVTGISQNDDKTWTVSFKNLKTGKTDHVKTRFVFIGAGGAAVKLLQLTGLPEAKQYAGFPVGGEFLITDNPAITAQHTAKVYGRAELGAPPMSVPHIDTRYIDGKKYVLFGPFATYSNKFLKNGSQLDLLASTNKSNVLPMTTVGLENLDLVKYLVSQVMMSDEDRLNELRKYYPDAKAEDWRLSQGGQRVQIIKKEPGKPATLQFGTEIFASKDGAVTALLGASPGASTSPYIMLNLLEKAFPQQTEGKWNQKLHEIVVSYKQDLSKDPVLLDKVRQYTSSTLGLNYTSPFKAANDETAAAPVAKAN</sequence>
<gene>
    <name evidence="1" type="primary">mqo</name>
    <name type="ordered locus">AB57_1001</name>
</gene>